<name>GDAP2_NEMVE</name>
<gene>
    <name type="primary">gdap2</name>
    <name type="ORF">v1g195342</name>
</gene>
<sequence>MDPLGATANLVDINSLPKWSTTPVPNYEPGSNESQSSSFLSPFPVDEEINAKVVLWNGDITKLAADAIVNTTNESLSDRGALSERVHRAAGPELMQECRQQLLGCRTGEAKISEGYNLPARYVIHTVGPRYNTKYKTAAESALFSCYRNTMRLVRENKISTIGVCVVNTTKRGYPPEDGAHIALRTVRRFLEKYGSAVDTVAFVVEGAEAVVYAKVMPIYFPRDKLEEAHALTLMPDDIGNEEGEPIIPERQIRIVPKPPSLQHGEDVEEAEEAEGHLDMTELHVGKHAFAVMAGDHDQMTKQRAHRSDDGMKVVEQQRVYQRWLRRARTENFADFSRQKILYQSGVDFLGRPVVVFVARHFTAQNTDLGKAVAYFISVLDRIVNRDYVVVYFHTHSTEENQPPMSFLKELYHIVDNKYRRNLKAFYIVHPTVWARIVTWFFTTFTASSVKEKVHFLSGVQYLYDWINPDQLDIPAYVLEYDMKENGTNYHTPASTYRTGGL</sequence>
<feature type="chain" id="PRO_0000331404" description="Protein GDAP2 homolog">
    <location>
        <begin position="1"/>
        <end position="502"/>
    </location>
</feature>
<feature type="domain" description="Macro" evidence="2">
    <location>
        <begin position="40"/>
        <end position="221"/>
    </location>
</feature>
<feature type="domain" description="CRAL-TRIO" evidence="1">
    <location>
        <begin position="329"/>
        <end position="486"/>
    </location>
</feature>
<dbReference type="EMBL" id="DS470082">
    <property type="protein sequence ID" value="EDO30294.1"/>
    <property type="molecule type" value="Genomic_DNA"/>
</dbReference>
<dbReference type="RefSeq" id="XP_001622394.1">
    <property type="nucleotide sequence ID" value="XM_001622344.1"/>
</dbReference>
<dbReference type="SMR" id="A7T167"/>
<dbReference type="EnsemblMetazoa" id="EDO30294">
    <property type="protein sequence ID" value="EDO30294"/>
    <property type="gene ID" value="NEMVEDRAFT_v1g195342"/>
</dbReference>
<dbReference type="GeneID" id="5501034"/>
<dbReference type="KEGG" id="nve:5501034"/>
<dbReference type="eggNOG" id="KOG2633">
    <property type="taxonomic scope" value="Eukaryota"/>
</dbReference>
<dbReference type="HOGENOM" id="CLU_026877_0_0_1"/>
<dbReference type="InParanoid" id="A7T167"/>
<dbReference type="OMA" id="IHPTFWT"/>
<dbReference type="OrthoDB" id="365077at2759"/>
<dbReference type="PhylomeDB" id="A7T167"/>
<dbReference type="Proteomes" id="UP000001593">
    <property type="component" value="Unassembled WGS sequence"/>
</dbReference>
<dbReference type="CDD" id="cd02905">
    <property type="entry name" value="Macro_GDAP2-like"/>
    <property type="match status" value="1"/>
</dbReference>
<dbReference type="CDD" id="cd00170">
    <property type="entry name" value="SEC14"/>
    <property type="match status" value="1"/>
</dbReference>
<dbReference type="Gene3D" id="3.40.525.10">
    <property type="entry name" value="CRAL-TRIO lipid binding domain"/>
    <property type="match status" value="1"/>
</dbReference>
<dbReference type="Gene3D" id="3.40.220.10">
    <property type="entry name" value="Leucine Aminopeptidase, subunit E, domain 1"/>
    <property type="match status" value="1"/>
</dbReference>
<dbReference type="InterPro" id="IPR001251">
    <property type="entry name" value="CRAL-TRIO_dom"/>
</dbReference>
<dbReference type="InterPro" id="IPR036865">
    <property type="entry name" value="CRAL-TRIO_dom_sf"/>
</dbReference>
<dbReference type="InterPro" id="IPR002589">
    <property type="entry name" value="Macro_dom"/>
</dbReference>
<dbReference type="InterPro" id="IPR043472">
    <property type="entry name" value="Macro_dom-like"/>
</dbReference>
<dbReference type="InterPro" id="IPR035793">
    <property type="entry name" value="Macro_GDAP2"/>
</dbReference>
<dbReference type="PANTHER" id="PTHR11106">
    <property type="entry name" value="GANGLIOSIDE INDUCED DIFFERENTIATION ASSOCIATED PROTEIN 2-RELATED"/>
    <property type="match status" value="1"/>
</dbReference>
<dbReference type="PANTHER" id="PTHR11106:SF72">
    <property type="entry name" value="GANGLIOSIDE-INDUCED DIFFERENTIATION-ASSOCIATED PROTEIN 2"/>
    <property type="match status" value="1"/>
</dbReference>
<dbReference type="Pfam" id="PF13716">
    <property type="entry name" value="CRAL_TRIO_2"/>
    <property type="match status" value="1"/>
</dbReference>
<dbReference type="Pfam" id="PF01661">
    <property type="entry name" value="Macro"/>
    <property type="match status" value="1"/>
</dbReference>
<dbReference type="SMART" id="SM00506">
    <property type="entry name" value="A1pp"/>
    <property type="match status" value="1"/>
</dbReference>
<dbReference type="SMART" id="SM00516">
    <property type="entry name" value="SEC14"/>
    <property type="match status" value="1"/>
</dbReference>
<dbReference type="SUPFAM" id="SSF52087">
    <property type="entry name" value="CRAL/TRIO domain"/>
    <property type="match status" value="1"/>
</dbReference>
<dbReference type="SUPFAM" id="SSF52949">
    <property type="entry name" value="Macro domain-like"/>
    <property type="match status" value="1"/>
</dbReference>
<dbReference type="PROSITE" id="PS50191">
    <property type="entry name" value="CRAL_TRIO"/>
    <property type="match status" value="1"/>
</dbReference>
<dbReference type="PROSITE" id="PS51154">
    <property type="entry name" value="MACRO"/>
    <property type="match status" value="1"/>
</dbReference>
<keyword id="KW-1185">Reference proteome</keyword>
<accession>A7T167</accession>
<comment type="similarity">
    <text evidence="3">Belongs to the GDAP2 family.</text>
</comment>
<organism>
    <name type="scientific">Nematostella vectensis</name>
    <name type="common">Starlet sea anemone</name>
    <dbReference type="NCBI Taxonomy" id="45351"/>
    <lineage>
        <taxon>Eukaryota</taxon>
        <taxon>Metazoa</taxon>
        <taxon>Cnidaria</taxon>
        <taxon>Anthozoa</taxon>
        <taxon>Hexacorallia</taxon>
        <taxon>Actiniaria</taxon>
        <taxon>Edwardsiidae</taxon>
        <taxon>Nematostella</taxon>
    </lineage>
</organism>
<protein>
    <recommendedName>
        <fullName>Protein GDAP2 homolog</fullName>
    </recommendedName>
</protein>
<reference key="1">
    <citation type="journal article" date="2007" name="Science">
        <title>Sea anemone genome reveals ancestral eumetazoan gene repertoire and genomic organization.</title>
        <authorList>
            <person name="Putnam N.H."/>
            <person name="Srivastava M."/>
            <person name="Hellsten U."/>
            <person name="Dirks B."/>
            <person name="Chapman J."/>
            <person name="Salamov A."/>
            <person name="Terry A."/>
            <person name="Shapiro H."/>
            <person name="Lindquist E."/>
            <person name="Kapitonov V.V."/>
            <person name="Jurka J."/>
            <person name="Genikhovich G."/>
            <person name="Grigoriev I.V."/>
            <person name="Lucas S.M."/>
            <person name="Steele R.E."/>
            <person name="Finnerty J.R."/>
            <person name="Technau U."/>
            <person name="Martindale M.Q."/>
            <person name="Rokhsar D.S."/>
        </authorList>
    </citation>
    <scope>NUCLEOTIDE SEQUENCE [LARGE SCALE GENOMIC DNA]</scope>
    <source>
        <strain>CH2 X CH6</strain>
    </source>
</reference>
<proteinExistence type="inferred from homology"/>
<evidence type="ECO:0000255" key="1">
    <source>
        <dbReference type="PROSITE-ProRule" id="PRU00056"/>
    </source>
</evidence>
<evidence type="ECO:0000255" key="2">
    <source>
        <dbReference type="PROSITE-ProRule" id="PRU00490"/>
    </source>
</evidence>
<evidence type="ECO:0000305" key="3"/>